<sequence length="344" mass="38649">MQVNVDLKENSYKVFIDEFKELTIKGNVAIITNPKVGGLWLEFLLKNLKCDKKFIISVPDGEEYKNLNTIEQILEQLFSSKCDRKTTLIALGGGVISDMTGFAASIFERGIDFINFPTTLLAQVDASVGGKTGVNNKFGKNLIGSFHQPKAVFCESEFLNTLPPREFSAGVAEAIKMAVMFDKKFFEFFENSTLKSSDEIAKMVQTCVKIKADVVVKDEKETGIRAVLNYGHTFAHVIERITDYKEFLHGEAVSIGINMANNLALRLGFLSKNEVFKISETLKKFNLPTTFKIPNADEFYELFFMDKKTQNSKIKFILANSIGEFKICTDIPKDVVIATLKDFE</sequence>
<keyword id="KW-0028">Amino-acid biosynthesis</keyword>
<keyword id="KW-0057">Aromatic amino acid biosynthesis</keyword>
<keyword id="KW-0170">Cobalt</keyword>
<keyword id="KW-0963">Cytoplasm</keyword>
<keyword id="KW-0456">Lyase</keyword>
<keyword id="KW-0479">Metal-binding</keyword>
<keyword id="KW-0520">NAD</keyword>
<keyword id="KW-0547">Nucleotide-binding</keyword>
<keyword id="KW-1185">Reference proteome</keyword>
<keyword id="KW-0862">Zinc</keyword>
<gene>
    <name evidence="1" type="primary">aroB</name>
    <name type="ordered locus">CHAB381_1074</name>
</gene>
<protein>
    <recommendedName>
        <fullName evidence="1">3-dehydroquinate synthase</fullName>
        <shortName evidence="1">DHQS</shortName>
        <ecNumber evidence="1">4.2.3.4</ecNumber>
    </recommendedName>
</protein>
<dbReference type="EC" id="4.2.3.4" evidence="1"/>
<dbReference type="EMBL" id="CP000776">
    <property type="protein sequence ID" value="ABS51355.1"/>
    <property type="molecule type" value="Genomic_DNA"/>
</dbReference>
<dbReference type="RefSeq" id="WP_012108930.1">
    <property type="nucleotide sequence ID" value="NC_009714.1"/>
</dbReference>
<dbReference type="SMR" id="A7I291"/>
<dbReference type="STRING" id="360107.CHAB381_1074"/>
<dbReference type="KEGG" id="cha:CHAB381_1074"/>
<dbReference type="eggNOG" id="COG0337">
    <property type="taxonomic scope" value="Bacteria"/>
</dbReference>
<dbReference type="HOGENOM" id="CLU_001201_0_2_7"/>
<dbReference type="OrthoDB" id="9806583at2"/>
<dbReference type="UniPathway" id="UPA00053">
    <property type="reaction ID" value="UER00085"/>
</dbReference>
<dbReference type="Proteomes" id="UP000002407">
    <property type="component" value="Chromosome"/>
</dbReference>
<dbReference type="GO" id="GO:0005737">
    <property type="term" value="C:cytoplasm"/>
    <property type="evidence" value="ECO:0007669"/>
    <property type="project" value="UniProtKB-SubCell"/>
</dbReference>
<dbReference type="GO" id="GO:0003856">
    <property type="term" value="F:3-dehydroquinate synthase activity"/>
    <property type="evidence" value="ECO:0007669"/>
    <property type="project" value="UniProtKB-UniRule"/>
</dbReference>
<dbReference type="GO" id="GO:0046872">
    <property type="term" value="F:metal ion binding"/>
    <property type="evidence" value="ECO:0007669"/>
    <property type="project" value="UniProtKB-KW"/>
</dbReference>
<dbReference type="GO" id="GO:0000166">
    <property type="term" value="F:nucleotide binding"/>
    <property type="evidence" value="ECO:0007669"/>
    <property type="project" value="UniProtKB-KW"/>
</dbReference>
<dbReference type="GO" id="GO:0008652">
    <property type="term" value="P:amino acid biosynthetic process"/>
    <property type="evidence" value="ECO:0007669"/>
    <property type="project" value="UniProtKB-KW"/>
</dbReference>
<dbReference type="GO" id="GO:0009073">
    <property type="term" value="P:aromatic amino acid family biosynthetic process"/>
    <property type="evidence" value="ECO:0007669"/>
    <property type="project" value="UniProtKB-KW"/>
</dbReference>
<dbReference type="GO" id="GO:0009423">
    <property type="term" value="P:chorismate biosynthetic process"/>
    <property type="evidence" value="ECO:0007669"/>
    <property type="project" value="UniProtKB-UniRule"/>
</dbReference>
<dbReference type="CDD" id="cd08195">
    <property type="entry name" value="DHQS"/>
    <property type="match status" value="1"/>
</dbReference>
<dbReference type="FunFam" id="3.40.50.1970:FF:000007">
    <property type="entry name" value="Pentafunctional AROM polypeptide"/>
    <property type="match status" value="1"/>
</dbReference>
<dbReference type="Gene3D" id="3.40.50.1970">
    <property type="match status" value="1"/>
</dbReference>
<dbReference type="Gene3D" id="1.20.1090.10">
    <property type="entry name" value="Dehydroquinate synthase-like - alpha domain"/>
    <property type="match status" value="1"/>
</dbReference>
<dbReference type="HAMAP" id="MF_00110">
    <property type="entry name" value="DHQ_synthase"/>
    <property type="match status" value="1"/>
</dbReference>
<dbReference type="InterPro" id="IPR050071">
    <property type="entry name" value="Dehydroquinate_synthase"/>
</dbReference>
<dbReference type="InterPro" id="IPR016037">
    <property type="entry name" value="DHQ_synth_AroB"/>
</dbReference>
<dbReference type="InterPro" id="IPR030963">
    <property type="entry name" value="DHQ_synth_fam"/>
</dbReference>
<dbReference type="InterPro" id="IPR030960">
    <property type="entry name" value="DHQS/DOIS_N"/>
</dbReference>
<dbReference type="InterPro" id="IPR056179">
    <property type="entry name" value="DHQS_C"/>
</dbReference>
<dbReference type="NCBIfam" id="TIGR01357">
    <property type="entry name" value="aroB"/>
    <property type="match status" value="1"/>
</dbReference>
<dbReference type="PANTHER" id="PTHR43622">
    <property type="entry name" value="3-DEHYDROQUINATE SYNTHASE"/>
    <property type="match status" value="1"/>
</dbReference>
<dbReference type="PANTHER" id="PTHR43622:SF7">
    <property type="entry name" value="3-DEHYDROQUINATE SYNTHASE, CHLOROPLASTIC"/>
    <property type="match status" value="1"/>
</dbReference>
<dbReference type="Pfam" id="PF01761">
    <property type="entry name" value="DHQ_synthase"/>
    <property type="match status" value="1"/>
</dbReference>
<dbReference type="Pfam" id="PF24621">
    <property type="entry name" value="DHQS_C"/>
    <property type="match status" value="1"/>
</dbReference>
<dbReference type="PIRSF" id="PIRSF001455">
    <property type="entry name" value="DHQ_synth"/>
    <property type="match status" value="1"/>
</dbReference>
<dbReference type="SUPFAM" id="SSF56796">
    <property type="entry name" value="Dehydroquinate synthase-like"/>
    <property type="match status" value="1"/>
</dbReference>
<reference key="1">
    <citation type="submission" date="2007-07" db="EMBL/GenBank/DDBJ databases">
        <title>Complete genome sequence of Campylobacter hominis ATCC BAA-381, a commensal isolated from the human gastrointestinal tract.</title>
        <authorList>
            <person name="Fouts D.E."/>
            <person name="Mongodin E.F."/>
            <person name="Puiu D."/>
            <person name="Sebastian Y."/>
            <person name="Miller W.G."/>
            <person name="Mandrell R.E."/>
            <person name="Nelson K.E."/>
        </authorList>
    </citation>
    <scope>NUCLEOTIDE SEQUENCE [LARGE SCALE GENOMIC DNA]</scope>
    <source>
        <strain>ATCC BAA-381 / DSM 21671 / CCUG 45161 / LMG 19568 / NCTC 13146 / CH001A</strain>
    </source>
</reference>
<evidence type="ECO:0000255" key="1">
    <source>
        <dbReference type="HAMAP-Rule" id="MF_00110"/>
    </source>
</evidence>
<comment type="function">
    <text evidence="1">Catalyzes the conversion of 3-deoxy-D-arabino-heptulosonate 7-phosphate (DAHP) to dehydroquinate (DHQ).</text>
</comment>
<comment type="catalytic activity">
    <reaction evidence="1">
        <text>7-phospho-2-dehydro-3-deoxy-D-arabino-heptonate = 3-dehydroquinate + phosphate</text>
        <dbReference type="Rhea" id="RHEA:21968"/>
        <dbReference type="ChEBI" id="CHEBI:32364"/>
        <dbReference type="ChEBI" id="CHEBI:43474"/>
        <dbReference type="ChEBI" id="CHEBI:58394"/>
        <dbReference type="EC" id="4.2.3.4"/>
    </reaction>
</comment>
<comment type="cofactor">
    <cofactor evidence="1">
        <name>Co(2+)</name>
        <dbReference type="ChEBI" id="CHEBI:48828"/>
    </cofactor>
    <cofactor evidence="1">
        <name>Zn(2+)</name>
        <dbReference type="ChEBI" id="CHEBI:29105"/>
    </cofactor>
    <text evidence="1">Binds 1 divalent metal cation per subunit. Can use either Co(2+) or Zn(2+).</text>
</comment>
<comment type="cofactor">
    <cofactor evidence="1">
        <name>NAD(+)</name>
        <dbReference type="ChEBI" id="CHEBI:57540"/>
    </cofactor>
</comment>
<comment type="pathway">
    <text evidence="1">Metabolic intermediate biosynthesis; chorismate biosynthesis; chorismate from D-erythrose 4-phosphate and phosphoenolpyruvate: step 2/7.</text>
</comment>
<comment type="subcellular location">
    <subcellularLocation>
        <location evidence="1">Cytoplasm</location>
    </subcellularLocation>
</comment>
<comment type="similarity">
    <text evidence="1">Belongs to the sugar phosphate cyclases superfamily. Dehydroquinate synthase family.</text>
</comment>
<accession>A7I291</accession>
<feature type="chain" id="PRO_1000117478" description="3-dehydroquinate synthase">
    <location>
        <begin position="1"/>
        <end position="344"/>
    </location>
</feature>
<feature type="binding site" evidence="1">
    <location>
        <begin position="60"/>
        <end position="65"/>
    </location>
    <ligand>
        <name>NAD(+)</name>
        <dbReference type="ChEBI" id="CHEBI:57540"/>
    </ligand>
</feature>
<feature type="binding site" evidence="1">
    <location>
        <begin position="94"/>
        <end position="98"/>
    </location>
    <ligand>
        <name>NAD(+)</name>
        <dbReference type="ChEBI" id="CHEBI:57540"/>
    </ligand>
</feature>
<feature type="binding site" evidence="1">
    <location>
        <begin position="118"/>
        <end position="119"/>
    </location>
    <ligand>
        <name>NAD(+)</name>
        <dbReference type="ChEBI" id="CHEBI:57540"/>
    </ligand>
</feature>
<feature type="binding site" evidence="1">
    <location>
        <position position="131"/>
    </location>
    <ligand>
        <name>NAD(+)</name>
        <dbReference type="ChEBI" id="CHEBI:57540"/>
    </ligand>
</feature>
<feature type="binding site" evidence="1">
    <location>
        <position position="140"/>
    </location>
    <ligand>
        <name>NAD(+)</name>
        <dbReference type="ChEBI" id="CHEBI:57540"/>
    </ligand>
</feature>
<feature type="binding site" evidence="1">
    <location>
        <begin position="158"/>
        <end position="161"/>
    </location>
    <ligand>
        <name>NAD(+)</name>
        <dbReference type="ChEBI" id="CHEBI:57540"/>
    </ligand>
</feature>
<feature type="binding site" evidence="1">
    <location>
        <position position="173"/>
    </location>
    <ligand>
        <name>Zn(2+)</name>
        <dbReference type="ChEBI" id="CHEBI:29105"/>
    </ligand>
</feature>
<feature type="binding site" evidence="1">
    <location>
        <position position="232"/>
    </location>
    <ligand>
        <name>Zn(2+)</name>
        <dbReference type="ChEBI" id="CHEBI:29105"/>
    </ligand>
</feature>
<feature type="binding site" evidence="1">
    <location>
        <position position="249"/>
    </location>
    <ligand>
        <name>Zn(2+)</name>
        <dbReference type="ChEBI" id="CHEBI:29105"/>
    </ligand>
</feature>
<name>AROB_CAMHC</name>
<proteinExistence type="inferred from homology"/>
<organism>
    <name type="scientific">Campylobacter hominis (strain ATCC BAA-381 / DSM 21671 / CCUG 45161 / LMG 19568 / NCTC 13146 / CH001A)</name>
    <dbReference type="NCBI Taxonomy" id="360107"/>
    <lineage>
        <taxon>Bacteria</taxon>
        <taxon>Pseudomonadati</taxon>
        <taxon>Campylobacterota</taxon>
        <taxon>Epsilonproteobacteria</taxon>
        <taxon>Campylobacterales</taxon>
        <taxon>Campylobacteraceae</taxon>
        <taxon>Campylobacter</taxon>
    </lineage>
</organism>